<feature type="chain" id="PRO_0000209342" description="Equilibrative nucleoside transporter 2">
    <location>
        <begin position="1"/>
        <end position="456"/>
    </location>
</feature>
<feature type="topological domain" description="Cytoplasmic" evidence="2">
    <location>
        <begin position="1"/>
        <end position="12"/>
    </location>
</feature>
<feature type="transmembrane region" description="Helical" evidence="2">
    <location>
        <begin position="13"/>
        <end position="29"/>
    </location>
</feature>
<feature type="topological domain" description="Extracellular" evidence="2">
    <location>
        <begin position="30"/>
        <end position="68"/>
    </location>
</feature>
<feature type="transmembrane region" description="Helical" evidence="2">
    <location>
        <begin position="69"/>
        <end position="93"/>
    </location>
</feature>
<feature type="topological domain" description="Cytoplasmic" evidence="2">
    <location>
        <begin position="94"/>
        <end position="97"/>
    </location>
</feature>
<feature type="transmembrane region" description="Helical" evidence="2">
    <location>
        <begin position="98"/>
        <end position="116"/>
    </location>
</feature>
<feature type="topological domain" description="Extracellular" evidence="2">
    <location>
        <begin position="117"/>
        <end position="124"/>
    </location>
</feature>
<feature type="transmembrane region" description="Helical" evidence="2">
    <location>
        <begin position="125"/>
        <end position="143"/>
    </location>
</feature>
<feature type="topological domain" description="Cytoplasmic" evidence="2">
    <location>
        <begin position="144"/>
        <end position="160"/>
    </location>
</feature>
<feature type="transmembrane region" description="Helical" evidence="2">
    <location>
        <begin position="161"/>
        <end position="185"/>
    </location>
</feature>
<feature type="topological domain" description="Extracellular" evidence="2">
    <location>
        <begin position="186"/>
        <end position="192"/>
    </location>
</feature>
<feature type="transmembrane region" description="Helical" evidence="2">
    <location>
        <begin position="193"/>
        <end position="213"/>
    </location>
</feature>
<feature type="topological domain" description="Cytoplasmic" evidence="2">
    <location>
        <begin position="214"/>
        <end position="291"/>
    </location>
</feature>
<feature type="transmembrane region" description="Helical" evidence="2">
    <location>
        <begin position="292"/>
        <end position="311"/>
    </location>
</feature>
<feature type="topological domain" description="Extracellular" evidence="2">
    <location>
        <begin position="312"/>
        <end position="323"/>
    </location>
</feature>
<feature type="transmembrane region" description="Helical" evidence="2">
    <location>
        <begin position="324"/>
        <end position="342"/>
    </location>
</feature>
<feature type="topological domain" description="Cytoplasmic" evidence="2">
    <location>
        <begin position="343"/>
        <end position="359"/>
    </location>
</feature>
<feature type="transmembrane region" description="Helical" evidence="2">
    <location>
        <begin position="360"/>
        <end position="378"/>
    </location>
</feature>
<feature type="topological domain" description="Extracellular" evidence="2">
    <location>
        <begin position="379"/>
        <end position="393"/>
    </location>
</feature>
<feature type="transmembrane region" description="Helical" evidence="2">
    <location>
        <begin position="394"/>
        <end position="413"/>
    </location>
</feature>
<feature type="topological domain" description="Cytoplasmic" evidence="2">
    <location>
        <begin position="414"/>
        <end position="431"/>
    </location>
</feature>
<feature type="transmembrane region" description="Helical" evidence="2">
    <location>
        <begin position="432"/>
        <end position="452"/>
    </location>
</feature>
<feature type="topological domain" description="Extracellular" evidence="2">
    <location>
        <begin position="453"/>
        <end position="456"/>
    </location>
</feature>
<feature type="modified residue" description="Phosphoserine" evidence="1">
    <location>
        <position position="251"/>
    </location>
</feature>
<feature type="glycosylation site" description="N-linked (GlcNAc...) asparagine" evidence="2">
    <location>
        <position position="47"/>
    </location>
</feature>
<feature type="glycosylation site" description="N-linked (GlcNAc...) asparagine" evidence="2">
    <location>
        <position position="56"/>
    </location>
</feature>
<sequence length="456" mass="50265">MAHGNAPRDSYHLVGISFFILGLGTLLPWNFFITAIPYFQGRLAGTNSSAETPSTNHTSPTDTFNFNNWVTLLSQLPLLLFTLLNSFLYQCIPESVRILGSLLAILLLFALTAALVKVDLSPGLFFSITMASVWFINSFCAVLQGSLFGQLGTMPSTYSTLFLSGQGLAGIFAALAMLTSLASGVDPQTSALGYFITPCVGILLSIICYLSLPHLKFARYYLTKKPQAPVQELETKAELLGADEKNGIPVSPQQAGPTLDLDPEKELELGLEEPQKPGKPSVFVVFRKIWLTALCLVLVFTVTLSVFPAITAMVTTSSNSPGKWSQFFNPICCFLLFNVMDWLGRSLTSYFLWPDEDSQLLPLLVCLRFLFVPLFMLCHVPQRARLPIIFWQDAYFITFMLLFAISNGYFVSLTMCLAPRQVLPHEREVAGALMTFFLALGLSCGASLSFLFKALL</sequence>
<protein>
    <recommendedName>
        <fullName evidence="6">Equilibrative nucleoside transporter 2</fullName>
        <shortName evidence="6">rENT2</shortName>
    </recommendedName>
    <alternativeName>
        <fullName evidence="6">Equilibrative nitrobenzylmercaptopurine riboside-insensitive nucleoside transporter</fullName>
        <shortName evidence="6">Equilibrative NBMPR-insensitive nucleoside transporter</shortName>
    </alternativeName>
    <alternativeName>
        <fullName evidence="6">Nucleoside transporter, ei-type</fullName>
    </alternativeName>
    <alternativeName>
        <fullName evidence="1">Solute carrier family 29 member 2</fullName>
    </alternativeName>
</protein>
<name>S29A2_RAT</name>
<evidence type="ECO:0000250" key="1">
    <source>
        <dbReference type="UniProtKB" id="Q14542"/>
    </source>
</evidence>
<evidence type="ECO:0000255" key="2"/>
<evidence type="ECO:0000269" key="3">
    <source>
    </source>
</evidence>
<evidence type="ECO:0000269" key="4">
    <source>
    </source>
</evidence>
<evidence type="ECO:0000269" key="5">
    <source>
    </source>
</evidence>
<evidence type="ECO:0000303" key="6">
    <source>
    </source>
</evidence>
<evidence type="ECO:0000305" key="7"/>
<evidence type="ECO:0000305" key="8">
    <source>
    </source>
</evidence>
<evidence type="ECO:0000312" key="9">
    <source>
        <dbReference type="RGD" id="69296"/>
    </source>
</evidence>
<comment type="function">
    <text evidence="1 3 4 5">Bidirectional uniporter involved in the facilitative transport of nucleosides and nucleobases, and contributes to maintaining their cellular homeostasis (PubMed:18048066, PubMed:9353301). Functions as a Na(+)-independent, passive transporter (By similarity). Involved in the transport of nucleosides such as inosine, adenosine, uridine, thymidine, cytidine and guanosine (PubMed:9353301). Also able to transport purine nucleobases (hypoxanthine, adenine, guanine) and pyrimidine nucleobases (thymine, uracil) (PubMed:18048066). Involved in nucleoside transport at basolateral membrane of kidney cells, allowing liver absorption of nucleoside metabolites (By similarity). Mediates apical nucleoside uptake into Sertoli cells, thereby regulating the transport of nucleosides in testis across the blood-testis-barrier (PubMed:23639800). Mediates both the influx and efflux of hypoxanthine in skeletal muscle microvascular endothelial cells to control the amount of intracellular hypoxanthine available for xanthine oxidase-mediated ROS production (PubMed:18048066).</text>
</comment>
<comment type="catalytic activity">
    <reaction evidence="5">
        <text>uridine(out) = uridine(in)</text>
        <dbReference type="Rhea" id="RHEA:71519"/>
        <dbReference type="ChEBI" id="CHEBI:16704"/>
    </reaction>
    <physiologicalReaction direction="left-to-right" evidence="8">
        <dbReference type="Rhea" id="RHEA:71520"/>
    </physiologicalReaction>
    <physiologicalReaction direction="right-to-left" evidence="8">
        <dbReference type="Rhea" id="RHEA:71521"/>
    </physiologicalReaction>
</comment>
<comment type="catalytic activity">
    <reaction evidence="1">
        <text>inosine(in) = inosine(out)</text>
        <dbReference type="Rhea" id="RHEA:75375"/>
        <dbReference type="ChEBI" id="CHEBI:17596"/>
    </reaction>
    <physiologicalReaction direction="left-to-right" evidence="1">
        <dbReference type="Rhea" id="RHEA:75376"/>
    </physiologicalReaction>
    <physiologicalReaction direction="right-to-left" evidence="1">
        <dbReference type="Rhea" id="RHEA:75377"/>
    </physiologicalReaction>
</comment>
<comment type="catalytic activity">
    <reaction evidence="1">
        <text>adenosine(in) = adenosine(out)</text>
        <dbReference type="Rhea" id="RHEA:75343"/>
        <dbReference type="ChEBI" id="CHEBI:16335"/>
    </reaction>
    <physiologicalReaction direction="left-to-right" evidence="1">
        <dbReference type="Rhea" id="RHEA:75344"/>
    </physiologicalReaction>
    <physiologicalReaction direction="right-to-left" evidence="1">
        <dbReference type="Rhea" id="RHEA:75345"/>
    </physiologicalReaction>
</comment>
<comment type="catalytic activity">
    <reaction evidence="1">
        <text>thymidine(in) = thymidine(out)</text>
        <dbReference type="Rhea" id="RHEA:75363"/>
        <dbReference type="ChEBI" id="CHEBI:17748"/>
    </reaction>
    <physiologicalReaction direction="left-to-right" evidence="1">
        <dbReference type="Rhea" id="RHEA:75364"/>
    </physiologicalReaction>
    <physiologicalReaction direction="right-to-left" evidence="1">
        <dbReference type="Rhea" id="RHEA:75365"/>
    </physiologicalReaction>
</comment>
<comment type="catalytic activity">
    <reaction evidence="3">
        <text>hypoxanthine(out) = hypoxanthine(in)</text>
        <dbReference type="Rhea" id="RHEA:71515"/>
        <dbReference type="ChEBI" id="CHEBI:17368"/>
    </reaction>
    <physiologicalReaction direction="left-to-right" evidence="3">
        <dbReference type="Rhea" id="RHEA:71516"/>
    </physiologicalReaction>
    <physiologicalReaction direction="right-to-left" evidence="3">
        <dbReference type="Rhea" id="RHEA:71517"/>
    </physiologicalReaction>
</comment>
<comment type="catalytic activity">
    <reaction evidence="1">
        <text>adenine(out) = adenine(in)</text>
        <dbReference type="Rhea" id="RHEA:71523"/>
        <dbReference type="ChEBI" id="CHEBI:16708"/>
    </reaction>
    <physiologicalReaction direction="left-to-right" evidence="1">
        <dbReference type="Rhea" id="RHEA:71524"/>
    </physiologicalReaction>
    <physiologicalReaction direction="right-to-left" evidence="1">
        <dbReference type="Rhea" id="RHEA:71525"/>
    </physiologicalReaction>
</comment>
<comment type="catalytic activity">
    <reaction evidence="1">
        <text>cytidine(in) = cytidine(out)</text>
        <dbReference type="Rhea" id="RHEA:75367"/>
        <dbReference type="ChEBI" id="CHEBI:17562"/>
    </reaction>
    <physiologicalReaction direction="left-to-right" evidence="1">
        <dbReference type="Rhea" id="RHEA:75368"/>
    </physiologicalReaction>
    <physiologicalReaction direction="right-to-left" evidence="1">
        <dbReference type="Rhea" id="RHEA:75369"/>
    </physiologicalReaction>
</comment>
<comment type="catalytic activity">
    <reaction evidence="1">
        <text>thymine(out) = thymine(in)</text>
        <dbReference type="Rhea" id="RHEA:71527"/>
        <dbReference type="ChEBI" id="CHEBI:17821"/>
    </reaction>
    <physiologicalReaction direction="left-to-right" evidence="1">
        <dbReference type="Rhea" id="RHEA:71528"/>
    </physiologicalReaction>
    <physiologicalReaction direction="right-to-left" evidence="1">
        <dbReference type="Rhea" id="RHEA:71529"/>
    </physiologicalReaction>
</comment>
<comment type="catalytic activity">
    <reaction evidence="1">
        <text>uracil(in) = uracil(out)</text>
        <dbReference type="Rhea" id="RHEA:69404"/>
        <dbReference type="ChEBI" id="CHEBI:17568"/>
    </reaction>
    <physiologicalReaction direction="left-to-right" evidence="1">
        <dbReference type="Rhea" id="RHEA:69405"/>
    </physiologicalReaction>
    <physiologicalReaction direction="right-to-left" evidence="1">
        <dbReference type="Rhea" id="RHEA:69406"/>
    </physiologicalReaction>
</comment>
<comment type="catalytic activity">
    <reaction evidence="1">
        <text>guanine(out) = guanine(in)</text>
        <dbReference type="Rhea" id="RHEA:71531"/>
        <dbReference type="ChEBI" id="CHEBI:16235"/>
    </reaction>
    <physiologicalReaction direction="left-to-right" evidence="1">
        <dbReference type="Rhea" id="RHEA:71532"/>
    </physiologicalReaction>
    <physiologicalReaction direction="right-to-left" evidence="1">
        <dbReference type="Rhea" id="RHEA:71533"/>
    </physiologicalReaction>
</comment>
<comment type="catalytic activity">
    <reaction evidence="1">
        <text>guanosine(in) = guanosine(out)</text>
        <dbReference type="Rhea" id="RHEA:75371"/>
        <dbReference type="ChEBI" id="CHEBI:16750"/>
    </reaction>
    <physiologicalReaction direction="left-to-right" evidence="1">
        <dbReference type="Rhea" id="RHEA:75372"/>
    </physiologicalReaction>
    <physiologicalReaction direction="right-to-left" evidence="1">
        <dbReference type="Rhea" id="RHEA:75373"/>
    </physiologicalReaction>
</comment>
<comment type="biophysicochemical properties">
    <kinetics>
        <KM evidence="3">300 uM for hypoxanthine (for influx kinetics)</KM>
        <KM evidence="3">189 uM for hypoxanthine (for efflux kinetics)</KM>
    </kinetics>
</comment>
<comment type="subcellular location">
    <subcellularLocation>
        <location evidence="4">Apical cell membrane</location>
        <topology evidence="7">Multi-pass membrane protein</topology>
    </subcellularLocation>
    <subcellularLocation>
        <location evidence="1">Basolateral cell membrane</location>
        <topology evidence="7">Multi-pass membrane protein</topology>
    </subcellularLocation>
    <text evidence="4">Localized to the apical membrane of Sertoli cells.</text>
</comment>
<comment type="tissue specificity">
    <text evidence="3 4">Expressed in squeletal muscles (PubMed:18048066). Expressed in testis at the blood-brain-barrier (PubMed:23639800).</text>
</comment>
<comment type="miscellaneous">
    <text evidence="3 5">Transport activity is insensitive to nanomolar concentrations of the inhibitor nitrobenzylmercaptopurine riboside (NBMPR) (PubMed:18048066, PubMed:9353301). Inhibited by higher concentrations of NBMPR (1uM-10uM) (PubMed:18048066, PubMed:9353301).</text>
</comment>
<comment type="similarity">
    <text evidence="7">Belongs to the SLC29A/ENT transporter (TC 2.A.57) family.</text>
</comment>
<reference key="1">
    <citation type="journal article" date="1997" name="J. Biol. Chem.">
        <title>Molecular cloning and functional characterization of nitrobenzylthioinosine (NBMPR)-sensitive (es) and NBMPR-insensitive (ei) equilibrative nucleoside transporter proteins (rENT1 and rENT2) from rat tissues.</title>
        <authorList>
            <person name="Yao S.Y.M."/>
            <person name="Ng A.M.L."/>
            <person name="Muzyka W.R."/>
            <person name="Griffiths M."/>
            <person name="Cass C.E."/>
            <person name="Baldwin S.A."/>
            <person name="Young J.D."/>
        </authorList>
    </citation>
    <scope>NUCLEOTIDE SEQUENCE [MRNA]</scope>
    <scope>FUNCTION</scope>
    <scope>TRANSPORTER ACTIVITY</scope>
    <scope>MISCELLANEOUS</scope>
    <source>
        <strain>Sprague-Dawley</strain>
        <tissue>Jejunum</tissue>
    </source>
</reference>
<reference key="2">
    <citation type="journal article" date="2013" name="J. Pharmacol. Exp. Ther.">
        <title>Basolateral uptake of nucleosides by Sertoli cells is mediated primarily by equilibrative nucleoside transporter 1.</title>
        <authorList>
            <person name="Klein D.M."/>
            <person name="Evans K.K."/>
            <person name="Hardwick R.N."/>
            <person name="Dantzler W.H."/>
            <person name="Wright S.H."/>
            <person name="Cherrington N.J."/>
        </authorList>
    </citation>
    <scope>FUNCTION</scope>
    <scope>SUBCELLULAR LOCATION</scope>
    <scope>TISSUE SPECIFICITY</scope>
</reference>
<reference key="3">
    <citation type="journal article" date="2008" name="Microvasc. Res.">
        <title>Hypoxanthine uptake and release by equilibrative nucleoside transporter 2 (ENT2) of rat microvascular endothelial cells.</title>
        <authorList>
            <person name="Robillard K.R."/>
            <person name="Bone D.B."/>
            <person name="Hammond J.R."/>
        </authorList>
    </citation>
    <scope>FUNCTION</scope>
    <scope>TRANSPORTER ACTIVITY</scope>
    <scope>BIOPHYSICOCHEMICAL PROPERTIES</scope>
    <scope>TISSUE SPECIFICITY</scope>
    <scope>MISCELLANEOUS</scope>
</reference>
<dbReference type="EMBL" id="AF015305">
    <property type="protein sequence ID" value="AAB88050.1"/>
    <property type="molecule type" value="mRNA"/>
</dbReference>
<dbReference type="RefSeq" id="NP_113926.1">
    <property type="nucleotide sequence ID" value="NM_031738.1"/>
</dbReference>
<dbReference type="RefSeq" id="XP_017445770.1">
    <property type="nucleotide sequence ID" value="XM_017590281.1"/>
</dbReference>
<dbReference type="RefSeq" id="XP_017459751.1">
    <property type="nucleotide sequence ID" value="XM_017604262.1"/>
</dbReference>
<dbReference type="SMR" id="O54699"/>
<dbReference type="FunCoup" id="O54699">
    <property type="interactions" value="427"/>
</dbReference>
<dbReference type="STRING" id="10116.ENSRNOP00000027178"/>
<dbReference type="BindingDB" id="O54699"/>
<dbReference type="ChEMBL" id="CHEMBL1287614"/>
<dbReference type="DrugCentral" id="O54699"/>
<dbReference type="TCDB" id="2.A.57.1.4">
    <property type="family name" value="the equilibrative nucleoside transporter (ent) family"/>
</dbReference>
<dbReference type="GlyCosmos" id="O54699">
    <property type="glycosylation" value="2 sites, No reported glycans"/>
</dbReference>
<dbReference type="GlyGen" id="O54699">
    <property type="glycosylation" value="2 sites"/>
</dbReference>
<dbReference type="PhosphoSitePlus" id="O54699"/>
<dbReference type="PaxDb" id="10116-ENSRNOP00000027178"/>
<dbReference type="GeneID" id="65194"/>
<dbReference type="KEGG" id="rno:65194"/>
<dbReference type="UCSC" id="RGD:69296">
    <property type="organism name" value="rat"/>
</dbReference>
<dbReference type="AGR" id="RGD:69296"/>
<dbReference type="CTD" id="3177"/>
<dbReference type="RGD" id="69296">
    <property type="gene designation" value="Slc29a2"/>
</dbReference>
<dbReference type="VEuPathDB" id="HostDB:ENSRNOG00000020025"/>
<dbReference type="eggNOG" id="KOG1479">
    <property type="taxonomic scope" value="Eukaryota"/>
</dbReference>
<dbReference type="HOGENOM" id="CLU_021611_6_0_1"/>
<dbReference type="InParanoid" id="O54699"/>
<dbReference type="OrthoDB" id="82276at9989"/>
<dbReference type="PhylomeDB" id="O54699"/>
<dbReference type="TreeFam" id="TF313950"/>
<dbReference type="Reactome" id="R-RNO-83936">
    <property type="pathway name" value="Transport of nucleosides and free purine and pyrimidine bases across the plasma membrane"/>
</dbReference>
<dbReference type="Reactome" id="R-RNO-9748787">
    <property type="pathway name" value="Azathioprine ADME"/>
</dbReference>
<dbReference type="PRO" id="PR:O54699"/>
<dbReference type="Proteomes" id="UP000002494">
    <property type="component" value="Chromosome 1"/>
</dbReference>
<dbReference type="Bgee" id="ENSRNOG00000020025">
    <property type="expression patterns" value="Expressed in skeletal muscle tissue and 16 other cell types or tissues"/>
</dbReference>
<dbReference type="GO" id="GO:0016324">
    <property type="term" value="C:apical plasma membrane"/>
    <property type="evidence" value="ECO:0000314"/>
    <property type="project" value="UniProtKB"/>
</dbReference>
<dbReference type="GO" id="GO:0016323">
    <property type="term" value="C:basolateral plasma membrane"/>
    <property type="evidence" value="ECO:0000266"/>
    <property type="project" value="RGD"/>
</dbReference>
<dbReference type="GO" id="GO:0005886">
    <property type="term" value="C:plasma membrane"/>
    <property type="evidence" value="ECO:0000266"/>
    <property type="project" value="RGD"/>
</dbReference>
<dbReference type="GO" id="GO:0015207">
    <property type="term" value="F:adenine transmembrane transporter activity"/>
    <property type="evidence" value="ECO:0000250"/>
    <property type="project" value="UniProtKB"/>
</dbReference>
<dbReference type="GO" id="GO:0015212">
    <property type="term" value="F:cytidine transmembrane transporter activity"/>
    <property type="evidence" value="ECO:0000250"/>
    <property type="project" value="UniProtKB"/>
</dbReference>
<dbReference type="GO" id="GO:0015208">
    <property type="term" value="F:guanine transmembrane transporter activity"/>
    <property type="evidence" value="ECO:0000250"/>
    <property type="project" value="UniProtKB"/>
</dbReference>
<dbReference type="GO" id="GO:0005326">
    <property type="term" value="F:neurotransmitter transmembrane transporter activity"/>
    <property type="evidence" value="ECO:0000266"/>
    <property type="project" value="RGD"/>
</dbReference>
<dbReference type="GO" id="GO:0015205">
    <property type="term" value="F:nucleobase transmembrane transporter activity"/>
    <property type="evidence" value="ECO:0000314"/>
    <property type="project" value="UniProtKB"/>
</dbReference>
<dbReference type="GO" id="GO:0005337">
    <property type="term" value="F:nucleoside transmembrane transporter activity"/>
    <property type="evidence" value="ECO:0000314"/>
    <property type="project" value="UniProtKB"/>
</dbReference>
<dbReference type="GO" id="GO:0015211">
    <property type="term" value="F:purine nucleoside transmembrane transporter activity"/>
    <property type="evidence" value="ECO:0000266"/>
    <property type="project" value="RGD"/>
</dbReference>
<dbReference type="GO" id="GO:0015210">
    <property type="term" value="F:uracil transmembrane transporter activity"/>
    <property type="evidence" value="ECO:0000250"/>
    <property type="project" value="UniProtKB"/>
</dbReference>
<dbReference type="GO" id="GO:0015213">
    <property type="term" value="F:uridine transmembrane transporter activity"/>
    <property type="evidence" value="ECO:0000314"/>
    <property type="project" value="UniProtKB"/>
</dbReference>
<dbReference type="GO" id="GO:0015853">
    <property type="term" value="P:adenine transport"/>
    <property type="evidence" value="ECO:0000314"/>
    <property type="project" value="RGD"/>
</dbReference>
<dbReference type="GO" id="GO:0032238">
    <property type="term" value="P:adenosine transport"/>
    <property type="evidence" value="ECO:0000314"/>
    <property type="project" value="UniProtKB"/>
</dbReference>
<dbReference type="GO" id="GO:0032869">
    <property type="term" value="P:cellular response to insulin stimulus"/>
    <property type="evidence" value="ECO:0000270"/>
    <property type="project" value="RGD"/>
</dbReference>
<dbReference type="GO" id="GO:0015861">
    <property type="term" value="P:cytidine transport"/>
    <property type="evidence" value="ECO:0000250"/>
    <property type="project" value="UniProtKB"/>
</dbReference>
<dbReference type="GO" id="GO:1903716">
    <property type="term" value="P:guanine transmembrane transport"/>
    <property type="evidence" value="ECO:0000250"/>
    <property type="project" value="UniProtKB"/>
</dbReference>
<dbReference type="GO" id="GO:0015854">
    <property type="term" value="P:guanine transport"/>
    <property type="evidence" value="ECO:0000315"/>
    <property type="project" value="RGD"/>
</dbReference>
<dbReference type="GO" id="GO:0035344">
    <property type="term" value="P:hypoxanthine transport"/>
    <property type="evidence" value="ECO:0000314"/>
    <property type="project" value="UniProtKB"/>
</dbReference>
<dbReference type="GO" id="GO:0035340">
    <property type="term" value="P:inosine transport"/>
    <property type="evidence" value="ECO:0000250"/>
    <property type="project" value="UniProtKB"/>
</dbReference>
<dbReference type="GO" id="GO:0007595">
    <property type="term" value="P:lactation"/>
    <property type="evidence" value="ECO:0000270"/>
    <property type="project" value="RGD"/>
</dbReference>
<dbReference type="GO" id="GO:0006836">
    <property type="term" value="P:neurotransmitter transport"/>
    <property type="evidence" value="ECO:0000266"/>
    <property type="project" value="RGD"/>
</dbReference>
<dbReference type="GO" id="GO:0001504">
    <property type="term" value="P:neurotransmitter uptake"/>
    <property type="evidence" value="ECO:0000266"/>
    <property type="project" value="RGD"/>
</dbReference>
<dbReference type="GO" id="GO:0015851">
    <property type="term" value="P:nucleobase transport"/>
    <property type="evidence" value="ECO:0000314"/>
    <property type="project" value="UniProtKB"/>
</dbReference>
<dbReference type="GO" id="GO:1901642">
    <property type="term" value="P:nucleoside transmembrane transport"/>
    <property type="evidence" value="ECO:0000314"/>
    <property type="project" value="UniProtKB"/>
</dbReference>
<dbReference type="GO" id="GO:0015858">
    <property type="term" value="P:nucleoside transport"/>
    <property type="evidence" value="ECO:0000314"/>
    <property type="project" value="UniProtKB"/>
</dbReference>
<dbReference type="GO" id="GO:1904823">
    <property type="term" value="P:purine nucleobase transmembrane transport"/>
    <property type="evidence" value="ECO:0000250"/>
    <property type="project" value="UniProtKB"/>
</dbReference>
<dbReference type="GO" id="GO:0015860">
    <property type="term" value="P:purine nucleoside transmembrane transport"/>
    <property type="evidence" value="ECO:0000266"/>
    <property type="project" value="RGD"/>
</dbReference>
<dbReference type="GO" id="GO:0072531">
    <property type="term" value="P:pyrimidine-containing compound transmembrane transport"/>
    <property type="evidence" value="ECO:0000266"/>
    <property type="project" value="RGD"/>
</dbReference>
<dbReference type="GO" id="GO:0035364">
    <property type="term" value="P:thymine transport"/>
    <property type="evidence" value="ECO:0000314"/>
    <property type="project" value="RGD"/>
</dbReference>
<dbReference type="GO" id="GO:1903791">
    <property type="term" value="P:uracil transmembrane transport"/>
    <property type="evidence" value="ECO:0000250"/>
    <property type="project" value="UniProtKB"/>
</dbReference>
<dbReference type="GO" id="GO:0015862">
    <property type="term" value="P:uridine transmembrane transport"/>
    <property type="evidence" value="ECO:0000314"/>
    <property type="project" value="UniProtKB"/>
</dbReference>
<dbReference type="FunFam" id="1.20.1250.20:FF:000359">
    <property type="entry name" value="equilibrative nucleoside transporter 2"/>
    <property type="match status" value="1"/>
</dbReference>
<dbReference type="InterPro" id="IPR034764">
    <property type="entry name" value="ENT1/ENT2"/>
</dbReference>
<dbReference type="InterPro" id="IPR002259">
    <property type="entry name" value="Eqnu_transpt"/>
</dbReference>
<dbReference type="InterPro" id="IPR036259">
    <property type="entry name" value="MFS_trans_sf"/>
</dbReference>
<dbReference type="NCBIfam" id="TIGR00939">
    <property type="entry name" value="2a57"/>
    <property type="match status" value="1"/>
</dbReference>
<dbReference type="PANTHER" id="PTHR10332">
    <property type="entry name" value="EQUILIBRATIVE NUCLEOSIDE TRANSPORTER"/>
    <property type="match status" value="1"/>
</dbReference>
<dbReference type="PANTHER" id="PTHR10332:SF8">
    <property type="entry name" value="EQUILIBRATIVE NUCLEOSIDE TRANSPORTER 2"/>
    <property type="match status" value="1"/>
</dbReference>
<dbReference type="Pfam" id="PF01733">
    <property type="entry name" value="Nucleoside_tran"/>
    <property type="match status" value="1"/>
</dbReference>
<dbReference type="PIRSF" id="PIRSF016379">
    <property type="entry name" value="ENT"/>
    <property type="match status" value="1"/>
</dbReference>
<dbReference type="PRINTS" id="PR01130">
    <property type="entry name" value="DERENTRNSPRT"/>
</dbReference>
<dbReference type="SUPFAM" id="SSF103473">
    <property type="entry name" value="MFS general substrate transporter"/>
    <property type="match status" value="1"/>
</dbReference>
<organism>
    <name type="scientific">Rattus norvegicus</name>
    <name type="common">Rat</name>
    <dbReference type="NCBI Taxonomy" id="10116"/>
    <lineage>
        <taxon>Eukaryota</taxon>
        <taxon>Metazoa</taxon>
        <taxon>Chordata</taxon>
        <taxon>Craniata</taxon>
        <taxon>Vertebrata</taxon>
        <taxon>Euteleostomi</taxon>
        <taxon>Mammalia</taxon>
        <taxon>Eutheria</taxon>
        <taxon>Euarchontoglires</taxon>
        <taxon>Glires</taxon>
        <taxon>Rodentia</taxon>
        <taxon>Myomorpha</taxon>
        <taxon>Muroidea</taxon>
        <taxon>Muridae</taxon>
        <taxon>Murinae</taxon>
        <taxon>Rattus</taxon>
    </lineage>
</organism>
<accession>O54699</accession>
<keyword id="KW-1003">Cell membrane</keyword>
<keyword id="KW-0325">Glycoprotein</keyword>
<keyword id="KW-0472">Membrane</keyword>
<keyword id="KW-0597">Phosphoprotein</keyword>
<keyword id="KW-1185">Reference proteome</keyword>
<keyword id="KW-0812">Transmembrane</keyword>
<keyword id="KW-1133">Transmembrane helix</keyword>
<keyword id="KW-0813">Transport</keyword>
<proteinExistence type="evidence at protein level"/>
<gene>
    <name evidence="9" type="primary">Slc29a2</name>
    <name type="synonym">Ent2</name>
</gene>